<keyword id="KW-0408">Iron</keyword>
<keyword id="KW-0411">Iron-sulfur</keyword>
<keyword id="KW-0479">Metal-binding</keyword>
<keyword id="KW-1185">Reference proteome</keyword>
<gene>
    <name evidence="1" type="primary">erpA</name>
    <name type="ordered locus">SO_1304</name>
</gene>
<proteinExistence type="inferred from homology"/>
<reference key="1">
    <citation type="journal article" date="2002" name="Nat. Biotechnol.">
        <title>Genome sequence of the dissimilatory metal ion-reducing bacterium Shewanella oneidensis.</title>
        <authorList>
            <person name="Heidelberg J.F."/>
            <person name="Paulsen I.T."/>
            <person name="Nelson K.E."/>
            <person name="Gaidos E.J."/>
            <person name="Nelson W.C."/>
            <person name="Read T.D."/>
            <person name="Eisen J.A."/>
            <person name="Seshadri R."/>
            <person name="Ward N.L."/>
            <person name="Methe B.A."/>
            <person name="Clayton R.A."/>
            <person name="Meyer T."/>
            <person name="Tsapin A."/>
            <person name="Scott J."/>
            <person name="Beanan M.J."/>
            <person name="Brinkac L.M."/>
            <person name="Daugherty S.C."/>
            <person name="DeBoy R.T."/>
            <person name="Dodson R.J."/>
            <person name="Durkin A.S."/>
            <person name="Haft D.H."/>
            <person name="Kolonay J.F."/>
            <person name="Madupu R."/>
            <person name="Peterson J.D."/>
            <person name="Umayam L.A."/>
            <person name="White O."/>
            <person name="Wolf A.M."/>
            <person name="Vamathevan J.J."/>
            <person name="Weidman J.F."/>
            <person name="Impraim M."/>
            <person name="Lee K."/>
            <person name="Berry K.J."/>
            <person name="Lee C."/>
            <person name="Mueller J."/>
            <person name="Khouri H.M."/>
            <person name="Gill J."/>
            <person name="Utterback T.R."/>
            <person name="McDonald L.A."/>
            <person name="Feldblyum T.V."/>
            <person name="Smith H.O."/>
            <person name="Venter J.C."/>
            <person name="Nealson K.H."/>
            <person name="Fraser C.M."/>
        </authorList>
    </citation>
    <scope>NUCLEOTIDE SEQUENCE [LARGE SCALE GENOMIC DNA]</scope>
    <source>
        <strain>ATCC 700550 / JCM 31522 / CIP 106686 / LMG 19005 / NCIMB 14063 / MR-1</strain>
    </source>
</reference>
<dbReference type="EMBL" id="AE014299">
    <property type="protein sequence ID" value="AAN54369.2"/>
    <property type="molecule type" value="Genomic_DNA"/>
</dbReference>
<dbReference type="RefSeq" id="NP_716924.2">
    <property type="nucleotide sequence ID" value="NC_004347.2"/>
</dbReference>
<dbReference type="RefSeq" id="WP_011071517.1">
    <property type="nucleotide sequence ID" value="NZ_CP053946.1"/>
</dbReference>
<dbReference type="SMR" id="Q8EHC4"/>
<dbReference type="STRING" id="211586.SO_1304"/>
<dbReference type="PaxDb" id="211586-SO_1304"/>
<dbReference type="GeneID" id="75189722"/>
<dbReference type="KEGG" id="son:SO_1304"/>
<dbReference type="PATRIC" id="fig|211586.12.peg.1254"/>
<dbReference type="eggNOG" id="COG0316">
    <property type="taxonomic scope" value="Bacteria"/>
</dbReference>
<dbReference type="HOGENOM" id="CLU_069054_5_3_6"/>
<dbReference type="OrthoDB" id="9801228at2"/>
<dbReference type="PhylomeDB" id="Q8EHC4"/>
<dbReference type="BioCyc" id="SONE211586:G1GMP-1206-MONOMER"/>
<dbReference type="Proteomes" id="UP000008186">
    <property type="component" value="Chromosome"/>
</dbReference>
<dbReference type="GO" id="GO:0005829">
    <property type="term" value="C:cytosol"/>
    <property type="evidence" value="ECO:0000318"/>
    <property type="project" value="GO_Central"/>
</dbReference>
<dbReference type="GO" id="GO:0051537">
    <property type="term" value="F:2 iron, 2 sulfur cluster binding"/>
    <property type="evidence" value="ECO:0000318"/>
    <property type="project" value="GO_Central"/>
</dbReference>
<dbReference type="GO" id="GO:0051539">
    <property type="term" value="F:4 iron, 4 sulfur cluster binding"/>
    <property type="evidence" value="ECO:0000318"/>
    <property type="project" value="GO_Central"/>
</dbReference>
<dbReference type="GO" id="GO:0005506">
    <property type="term" value="F:iron ion binding"/>
    <property type="evidence" value="ECO:0000318"/>
    <property type="project" value="GO_Central"/>
</dbReference>
<dbReference type="GO" id="GO:0016226">
    <property type="term" value="P:iron-sulfur cluster assembly"/>
    <property type="evidence" value="ECO:0000318"/>
    <property type="project" value="GO_Central"/>
</dbReference>
<dbReference type="FunFam" id="2.60.300.12:FF:000002">
    <property type="entry name" value="Iron-sulfur cluster insertion protein ErpA"/>
    <property type="match status" value="1"/>
</dbReference>
<dbReference type="Gene3D" id="2.60.300.12">
    <property type="entry name" value="HesB-like domain"/>
    <property type="match status" value="1"/>
</dbReference>
<dbReference type="HAMAP" id="MF_01380">
    <property type="entry name" value="Fe_S_insert_ErpA"/>
    <property type="match status" value="1"/>
</dbReference>
<dbReference type="InterPro" id="IPR000361">
    <property type="entry name" value="FeS_biogenesis"/>
</dbReference>
<dbReference type="InterPro" id="IPR016092">
    <property type="entry name" value="FeS_cluster_insertion"/>
</dbReference>
<dbReference type="InterPro" id="IPR017870">
    <property type="entry name" value="FeS_cluster_insertion_CS"/>
</dbReference>
<dbReference type="InterPro" id="IPR023063">
    <property type="entry name" value="FeS_cluster_insertion_RrpA"/>
</dbReference>
<dbReference type="InterPro" id="IPR035903">
    <property type="entry name" value="HesB-like_dom_sf"/>
</dbReference>
<dbReference type="NCBIfam" id="TIGR00049">
    <property type="entry name" value="iron-sulfur cluster assembly accessory protein"/>
    <property type="match status" value="1"/>
</dbReference>
<dbReference type="NCBIfam" id="NF010147">
    <property type="entry name" value="PRK13623.1"/>
    <property type="match status" value="1"/>
</dbReference>
<dbReference type="PANTHER" id="PTHR43011">
    <property type="entry name" value="IRON-SULFUR CLUSTER ASSEMBLY 2 HOMOLOG, MITOCHONDRIAL"/>
    <property type="match status" value="1"/>
</dbReference>
<dbReference type="PANTHER" id="PTHR43011:SF1">
    <property type="entry name" value="IRON-SULFUR CLUSTER ASSEMBLY 2 HOMOLOG, MITOCHONDRIAL"/>
    <property type="match status" value="1"/>
</dbReference>
<dbReference type="Pfam" id="PF01521">
    <property type="entry name" value="Fe-S_biosyn"/>
    <property type="match status" value="1"/>
</dbReference>
<dbReference type="SUPFAM" id="SSF89360">
    <property type="entry name" value="HesB-like domain"/>
    <property type="match status" value="1"/>
</dbReference>
<dbReference type="PROSITE" id="PS01152">
    <property type="entry name" value="HESB"/>
    <property type="match status" value="1"/>
</dbReference>
<evidence type="ECO:0000255" key="1">
    <source>
        <dbReference type="HAMAP-Rule" id="MF_01380"/>
    </source>
</evidence>
<comment type="function">
    <text evidence="1">Required for insertion of 4Fe-4S clusters for at least IspG.</text>
</comment>
<comment type="cofactor">
    <cofactor evidence="1">
        <name>iron-sulfur cluster</name>
        <dbReference type="ChEBI" id="CHEBI:30408"/>
    </cofactor>
    <text evidence="1">Binds 1 iron-sulfur cluster per subunit.</text>
</comment>
<comment type="subunit">
    <text evidence="1">Homodimer.</text>
</comment>
<comment type="similarity">
    <text evidence="1">Belongs to the HesB/IscA family.</text>
</comment>
<protein>
    <recommendedName>
        <fullName evidence="1">Iron-sulfur cluster insertion protein ErpA</fullName>
    </recommendedName>
</protein>
<organism>
    <name type="scientific">Shewanella oneidensis (strain ATCC 700550 / JCM 31522 / CIP 106686 / LMG 19005 / NCIMB 14063 / MR-1)</name>
    <dbReference type="NCBI Taxonomy" id="211586"/>
    <lineage>
        <taxon>Bacteria</taxon>
        <taxon>Pseudomonadati</taxon>
        <taxon>Pseudomonadota</taxon>
        <taxon>Gammaproteobacteria</taxon>
        <taxon>Alteromonadales</taxon>
        <taxon>Shewanellaceae</taxon>
        <taxon>Shewanella</taxon>
    </lineage>
</organism>
<name>ERPA_SHEON</name>
<sequence length="116" mass="12393">MTDQADATMPIKFTDAAAAKVKGLLEEEQNPALKLRVYVTGGGCSGFQYGFTFDEKVNEGDFTVEKQGVQLVVDPMSLQYLVGGEVDYTSGLEGSRFFVKNPNATTTCGCGASFSV</sequence>
<feature type="chain" id="PRO_0000311553" description="Iron-sulfur cluster insertion protein ErpA">
    <location>
        <begin position="1"/>
        <end position="116"/>
    </location>
</feature>
<feature type="binding site" evidence="1">
    <location>
        <position position="44"/>
    </location>
    <ligand>
        <name>iron-sulfur cluster</name>
        <dbReference type="ChEBI" id="CHEBI:30408"/>
    </ligand>
</feature>
<feature type="binding site" evidence="1">
    <location>
        <position position="108"/>
    </location>
    <ligand>
        <name>iron-sulfur cluster</name>
        <dbReference type="ChEBI" id="CHEBI:30408"/>
    </ligand>
</feature>
<feature type="binding site" evidence="1">
    <location>
        <position position="110"/>
    </location>
    <ligand>
        <name>iron-sulfur cluster</name>
        <dbReference type="ChEBI" id="CHEBI:30408"/>
    </ligand>
</feature>
<accession>Q8EHC4</accession>